<reference key="1">
    <citation type="journal article" date="2007" name="PLoS Genet.">
        <title>Meningococcal genetic variation mechanisms viewed through comparative analysis of serogroup C strain FAM18.</title>
        <authorList>
            <person name="Bentley S.D."/>
            <person name="Vernikos G.S."/>
            <person name="Snyder L.A.S."/>
            <person name="Churcher C."/>
            <person name="Arrowsmith C."/>
            <person name="Chillingworth T."/>
            <person name="Cronin A."/>
            <person name="Davis P.H."/>
            <person name="Holroyd N.E."/>
            <person name="Jagels K."/>
            <person name="Maddison M."/>
            <person name="Moule S."/>
            <person name="Rabbinowitsch E."/>
            <person name="Sharp S."/>
            <person name="Unwin L."/>
            <person name="Whitehead S."/>
            <person name="Quail M.A."/>
            <person name="Achtman M."/>
            <person name="Barrell B.G."/>
            <person name="Saunders N.J."/>
            <person name="Parkhill J."/>
        </authorList>
    </citation>
    <scope>NUCLEOTIDE SEQUENCE [LARGE SCALE GENOMIC DNA]</scope>
    <source>
        <strain>ATCC 700532 / DSM 15464 / FAM18</strain>
    </source>
</reference>
<feature type="chain" id="PRO_0000321652" description="Octanoyltransferase">
    <location>
        <begin position="1"/>
        <end position="207"/>
    </location>
</feature>
<feature type="domain" description="BPL/LPL catalytic" evidence="2">
    <location>
        <begin position="27"/>
        <end position="203"/>
    </location>
</feature>
<feature type="active site" description="Acyl-thioester intermediate" evidence="1">
    <location>
        <position position="164"/>
    </location>
</feature>
<feature type="binding site" evidence="1">
    <location>
        <begin position="66"/>
        <end position="73"/>
    </location>
    <ligand>
        <name>substrate</name>
    </ligand>
</feature>
<feature type="binding site" evidence="1">
    <location>
        <begin position="133"/>
        <end position="135"/>
    </location>
    <ligand>
        <name>substrate</name>
    </ligand>
</feature>
<feature type="binding site" evidence="1">
    <location>
        <begin position="146"/>
        <end position="148"/>
    </location>
    <ligand>
        <name>substrate</name>
    </ligand>
</feature>
<feature type="site" description="Lowers pKa of active site Cys" evidence="1">
    <location>
        <position position="130"/>
    </location>
</feature>
<evidence type="ECO:0000255" key="1">
    <source>
        <dbReference type="HAMAP-Rule" id="MF_00013"/>
    </source>
</evidence>
<evidence type="ECO:0000255" key="2">
    <source>
        <dbReference type="PROSITE-ProRule" id="PRU01067"/>
    </source>
</evidence>
<evidence type="ECO:0000305" key="3"/>
<accession>A1KU21</accession>
<gene>
    <name evidence="1" type="primary">lipB</name>
    <name type="ordered locus">NMC1111</name>
</gene>
<protein>
    <recommendedName>
        <fullName evidence="1">Octanoyltransferase</fullName>
        <ecNumber evidence="1">2.3.1.181</ecNumber>
    </recommendedName>
    <alternativeName>
        <fullName evidence="1">Lipoate-protein ligase B</fullName>
    </alternativeName>
    <alternativeName>
        <fullName evidence="1">Lipoyl/octanoyl transferase</fullName>
    </alternativeName>
    <alternativeName>
        <fullName evidence="1">Octanoyl-[acyl-carrier-protein]-protein N-octanoyltransferase</fullName>
    </alternativeName>
</protein>
<comment type="function">
    <text evidence="1">Catalyzes the transfer of endogenously produced octanoic acid from octanoyl-acyl-carrier-protein onto the lipoyl domains of lipoate-dependent enzymes. Lipoyl-ACP can also act as a substrate although octanoyl-ACP is likely to be the physiological substrate.</text>
</comment>
<comment type="catalytic activity">
    <reaction evidence="1">
        <text>octanoyl-[ACP] + L-lysyl-[protein] = N(6)-octanoyl-L-lysyl-[protein] + holo-[ACP] + H(+)</text>
        <dbReference type="Rhea" id="RHEA:17665"/>
        <dbReference type="Rhea" id="RHEA-COMP:9636"/>
        <dbReference type="Rhea" id="RHEA-COMP:9685"/>
        <dbReference type="Rhea" id="RHEA-COMP:9752"/>
        <dbReference type="Rhea" id="RHEA-COMP:9928"/>
        <dbReference type="ChEBI" id="CHEBI:15378"/>
        <dbReference type="ChEBI" id="CHEBI:29969"/>
        <dbReference type="ChEBI" id="CHEBI:64479"/>
        <dbReference type="ChEBI" id="CHEBI:78463"/>
        <dbReference type="ChEBI" id="CHEBI:78809"/>
        <dbReference type="EC" id="2.3.1.181"/>
    </reaction>
</comment>
<comment type="pathway">
    <text evidence="1">Protein modification; protein lipoylation via endogenous pathway; protein N(6)-(lipoyl)lysine from octanoyl-[acyl-carrier-protein]: step 1/2.</text>
</comment>
<comment type="subcellular location">
    <subcellularLocation>
        <location evidence="1">Cytoplasm</location>
    </subcellularLocation>
</comment>
<comment type="miscellaneous">
    <text evidence="1">In the reaction, the free carboxyl group of octanoic acid is attached via an amide linkage to the epsilon-amino group of a specific lysine residue of lipoyl domains of lipoate-dependent enzymes.</text>
</comment>
<comment type="similarity">
    <text evidence="1">Belongs to the LipB family.</text>
</comment>
<comment type="sequence caution" evidence="3">
    <conflict type="erroneous initiation">
        <sequence resource="EMBL-CDS" id="CAM10362"/>
    </conflict>
    <text>Truncated N-terminus.</text>
</comment>
<name>LIPB_NEIMF</name>
<organism>
    <name type="scientific">Neisseria meningitidis serogroup C / serotype 2a (strain ATCC 700532 / DSM 15464 / FAM18)</name>
    <dbReference type="NCBI Taxonomy" id="272831"/>
    <lineage>
        <taxon>Bacteria</taxon>
        <taxon>Pseudomonadati</taxon>
        <taxon>Pseudomonadota</taxon>
        <taxon>Betaproteobacteria</taxon>
        <taxon>Neisseriales</taxon>
        <taxon>Neisseriaceae</taxon>
        <taxon>Neisseria</taxon>
    </lineage>
</organism>
<sequence length="207" mass="22814">MKIIHKGLVEYLPTFEAMKTFNANRTASTEDELWVVEHPPVFTQGLAGKPEHLLIRDDIPIVQIDRGGQITYHGPGQLVVYTMIDFKRRKTSVRNIVSALENSIIATLAEYGIEAAADPKRPGVYVGERKIASLGLRIKGGSVYHGLALNVNMDLSPFTHINPCGYAGMEMTQIADFVQPCPTPDEVAAKLTAHLETQFTPKADNNE</sequence>
<proteinExistence type="inferred from homology"/>
<keyword id="KW-0012">Acyltransferase</keyword>
<keyword id="KW-0963">Cytoplasm</keyword>
<keyword id="KW-0808">Transferase</keyword>
<dbReference type="EC" id="2.3.1.181" evidence="1"/>
<dbReference type="EMBL" id="AM421808">
    <property type="protein sequence ID" value="CAM10362.1"/>
    <property type="status" value="ALT_INIT"/>
    <property type="molecule type" value="Genomic_DNA"/>
</dbReference>
<dbReference type="RefSeq" id="WP_002224522.1">
    <property type="nucleotide sequence ID" value="NC_008767.1"/>
</dbReference>
<dbReference type="SMR" id="A1KU21"/>
<dbReference type="KEGG" id="nmc:NMC1111"/>
<dbReference type="HOGENOM" id="CLU_035168_3_1_4"/>
<dbReference type="UniPathway" id="UPA00538">
    <property type="reaction ID" value="UER00592"/>
</dbReference>
<dbReference type="Proteomes" id="UP000002286">
    <property type="component" value="Chromosome"/>
</dbReference>
<dbReference type="GO" id="GO:0005737">
    <property type="term" value="C:cytoplasm"/>
    <property type="evidence" value="ECO:0007669"/>
    <property type="project" value="UniProtKB-SubCell"/>
</dbReference>
<dbReference type="GO" id="GO:0033819">
    <property type="term" value="F:lipoyl(octanoyl) transferase activity"/>
    <property type="evidence" value="ECO:0007669"/>
    <property type="project" value="UniProtKB-EC"/>
</dbReference>
<dbReference type="GO" id="GO:0036211">
    <property type="term" value="P:protein modification process"/>
    <property type="evidence" value="ECO:0007669"/>
    <property type="project" value="InterPro"/>
</dbReference>
<dbReference type="CDD" id="cd16444">
    <property type="entry name" value="LipB"/>
    <property type="match status" value="1"/>
</dbReference>
<dbReference type="FunFam" id="3.30.930.10:FF:000020">
    <property type="entry name" value="Octanoyltransferase"/>
    <property type="match status" value="1"/>
</dbReference>
<dbReference type="Gene3D" id="3.30.930.10">
    <property type="entry name" value="Bira Bifunctional Protein, Domain 2"/>
    <property type="match status" value="1"/>
</dbReference>
<dbReference type="HAMAP" id="MF_00013">
    <property type="entry name" value="LipB"/>
    <property type="match status" value="1"/>
</dbReference>
<dbReference type="InterPro" id="IPR045864">
    <property type="entry name" value="aa-tRNA-synth_II/BPL/LPL"/>
</dbReference>
<dbReference type="InterPro" id="IPR004143">
    <property type="entry name" value="BPL_LPL_catalytic"/>
</dbReference>
<dbReference type="InterPro" id="IPR000544">
    <property type="entry name" value="Octanoyltransferase"/>
</dbReference>
<dbReference type="InterPro" id="IPR020605">
    <property type="entry name" value="Octanoyltransferase_CS"/>
</dbReference>
<dbReference type="NCBIfam" id="TIGR00214">
    <property type="entry name" value="lipB"/>
    <property type="match status" value="1"/>
</dbReference>
<dbReference type="NCBIfam" id="NF010922">
    <property type="entry name" value="PRK14342.1"/>
    <property type="match status" value="1"/>
</dbReference>
<dbReference type="PANTHER" id="PTHR10993:SF7">
    <property type="entry name" value="LIPOYLTRANSFERASE 2, MITOCHONDRIAL-RELATED"/>
    <property type="match status" value="1"/>
</dbReference>
<dbReference type="PANTHER" id="PTHR10993">
    <property type="entry name" value="OCTANOYLTRANSFERASE"/>
    <property type="match status" value="1"/>
</dbReference>
<dbReference type="Pfam" id="PF21948">
    <property type="entry name" value="LplA-B_cat"/>
    <property type="match status" value="1"/>
</dbReference>
<dbReference type="PIRSF" id="PIRSF016262">
    <property type="entry name" value="LPLase"/>
    <property type="match status" value="1"/>
</dbReference>
<dbReference type="SUPFAM" id="SSF55681">
    <property type="entry name" value="Class II aaRS and biotin synthetases"/>
    <property type="match status" value="1"/>
</dbReference>
<dbReference type="PROSITE" id="PS51733">
    <property type="entry name" value="BPL_LPL_CATALYTIC"/>
    <property type="match status" value="1"/>
</dbReference>
<dbReference type="PROSITE" id="PS01313">
    <property type="entry name" value="LIPB"/>
    <property type="match status" value="1"/>
</dbReference>